<proteinExistence type="inferred from homology"/>
<organism>
    <name type="scientific">Bacillus mycoides (strain KBAB4)</name>
    <name type="common">Bacillus weihenstephanensis</name>
    <dbReference type="NCBI Taxonomy" id="315730"/>
    <lineage>
        <taxon>Bacteria</taxon>
        <taxon>Bacillati</taxon>
        <taxon>Bacillota</taxon>
        <taxon>Bacilli</taxon>
        <taxon>Bacillales</taxon>
        <taxon>Bacillaceae</taxon>
        <taxon>Bacillus</taxon>
        <taxon>Bacillus cereus group</taxon>
    </lineage>
</organism>
<evidence type="ECO:0000255" key="1">
    <source>
        <dbReference type="HAMAP-Rule" id="MF_00114"/>
    </source>
</evidence>
<protein>
    <recommendedName>
        <fullName evidence="1">Deoxyribose-phosphate aldolase</fullName>
        <shortName evidence="1">DERA</shortName>
        <ecNumber evidence="1">4.1.2.4</ecNumber>
    </recommendedName>
    <alternativeName>
        <fullName evidence="1">2-deoxy-D-ribose 5-phosphate aldolase</fullName>
    </alternativeName>
    <alternativeName>
        <fullName evidence="1">Phosphodeoxyriboaldolase</fullName>
        <shortName evidence="1">Deoxyriboaldolase</shortName>
    </alternativeName>
</protein>
<sequence>MNIAKLIDHTILKPNSTKEDVMKVIEEAKQYKFASVCINPTWVKLAAEELAGHDVDVCTVIGFPLGASTTETKAFETKDAIAKGATEVDMVINVGALKDGDNEFVEKDIYEVVQAAKGKALVKVIIETCLLTDEEKVRACELSVKAGADFVKTSTGFSTGGATAEDIALMRKTVGPNVGVKASGGVRTREDADKMVEAGASRVGASASVAIVLNDAKGATDNY</sequence>
<dbReference type="EC" id="4.1.2.4" evidence="1"/>
<dbReference type="EMBL" id="CP000903">
    <property type="protein sequence ID" value="ABY42987.1"/>
    <property type="molecule type" value="Genomic_DNA"/>
</dbReference>
<dbReference type="RefSeq" id="WP_002012110.1">
    <property type="nucleotide sequence ID" value="NZ_CAKMRX030000144.1"/>
</dbReference>
<dbReference type="SMR" id="A9VQK2"/>
<dbReference type="GeneID" id="66263111"/>
<dbReference type="KEGG" id="bwe:BcerKBAB4_1752"/>
<dbReference type="eggNOG" id="COG0274">
    <property type="taxonomic scope" value="Bacteria"/>
</dbReference>
<dbReference type="HOGENOM" id="CLU_053595_0_1_9"/>
<dbReference type="UniPathway" id="UPA00002">
    <property type="reaction ID" value="UER00468"/>
</dbReference>
<dbReference type="Proteomes" id="UP000002154">
    <property type="component" value="Chromosome"/>
</dbReference>
<dbReference type="GO" id="GO:0005737">
    <property type="term" value="C:cytoplasm"/>
    <property type="evidence" value="ECO:0007669"/>
    <property type="project" value="UniProtKB-SubCell"/>
</dbReference>
<dbReference type="GO" id="GO:0004139">
    <property type="term" value="F:deoxyribose-phosphate aldolase activity"/>
    <property type="evidence" value="ECO:0007669"/>
    <property type="project" value="UniProtKB-UniRule"/>
</dbReference>
<dbReference type="GO" id="GO:0006018">
    <property type="term" value="P:2-deoxyribose 1-phosphate catabolic process"/>
    <property type="evidence" value="ECO:0007669"/>
    <property type="project" value="UniProtKB-UniRule"/>
</dbReference>
<dbReference type="GO" id="GO:0016052">
    <property type="term" value="P:carbohydrate catabolic process"/>
    <property type="evidence" value="ECO:0007669"/>
    <property type="project" value="TreeGrafter"/>
</dbReference>
<dbReference type="GO" id="GO:0009264">
    <property type="term" value="P:deoxyribonucleotide catabolic process"/>
    <property type="evidence" value="ECO:0007669"/>
    <property type="project" value="InterPro"/>
</dbReference>
<dbReference type="CDD" id="cd00959">
    <property type="entry name" value="DeoC"/>
    <property type="match status" value="1"/>
</dbReference>
<dbReference type="FunFam" id="3.20.20.70:FF:000044">
    <property type="entry name" value="Deoxyribose-phosphate aldolase"/>
    <property type="match status" value="1"/>
</dbReference>
<dbReference type="Gene3D" id="3.20.20.70">
    <property type="entry name" value="Aldolase class I"/>
    <property type="match status" value="1"/>
</dbReference>
<dbReference type="HAMAP" id="MF_00114">
    <property type="entry name" value="DeoC_type1"/>
    <property type="match status" value="1"/>
</dbReference>
<dbReference type="InterPro" id="IPR013785">
    <property type="entry name" value="Aldolase_TIM"/>
</dbReference>
<dbReference type="InterPro" id="IPR011343">
    <property type="entry name" value="DeoC"/>
</dbReference>
<dbReference type="InterPro" id="IPR002915">
    <property type="entry name" value="DeoC/FbaB/LacD_aldolase"/>
</dbReference>
<dbReference type="InterPro" id="IPR028581">
    <property type="entry name" value="DeoC_typeI"/>
</dbReference>
<dbReference type="NCBIfam" id="TIGR00126">
    <property type="entry name" value="deoC"/>
    <property type="match status" value="1"/>
</dbReference>
<dbReference type="PANTHER" id="PTHR10889">
    <property type="entry name" value="DEOXYRIBOSE-PHOSPHATE ALDOLASE"/>
    <property type="match status" value="1"/>
</dbReference>
<dbReference type="PANTHER" id="PTHR10889:SF1">
    <property type="entry name" value="DEOXYRIBOSE-PHOSPHATE ALDOLASE"/>
    <property type="match status" value="1"/>
</dbReference>
<dbReference type="Pfam" id="PF01791">
    <property type="entry name" value="DeoC"/>
    <property type="match status" value="1"/>
</dbReference>
<dbReference type="PIRSF" id="PIRSF001357">
    <property type="entry name" value="DeoC"/>
    <property type="match status" value="1"/>
</dbReference>
<dbReference type="SMART" id="SM01133">
    <property type="entry name" value="DeoC"/>
    <property type="match status" value="1"/>
</dbReference>
<dbReference type="SUPFAM" id="SSF51569">
    <property type="entry name" value="Aldolase"/>
    <property type="match status" value="1"/>
</dbReference>
<accession>A9VQK2</accession>
<comment type="function">
    <text evidence="1">Catalyzes a reversible aldol reaction between acetaldehyde and D-glyceraldehyde 3-phosphate to generate 2-deoxy-D-ribose 5-phosphate.</text>
</comment>
<comment type="catalytic activity">
    <reaction evidence="1">
        <text>2-deoxy-D-ribose 5-phosphate = D-glyceraldehyde 3-phosphate + acetaldehyde</text>
        <dbReference type="Rhea" id="RHEA:12821"/>
        <dbReference type="ChEBI" id="CHEBI:15343"/>
        <dbReference type="ChEBI" id="CHEBI:59776"/>
        <dbReference type="ChEBI" id="CHEBI:62877"/>
        <dbReference type="EC" id="4.1.2.4"/>
    </reaction>
</comment>
<comment type="pathway">
    <text evidence="1">Carbohydrate degradation; 2-deoxy-D-ribose 1-phosphate degradation; D-glyceraldehyde 3-phosphate and acetaldehyde from 2-deoxy-alpha-D-ribose 1-phosphate: step 2/2.</text>
</comment>
<comment type="subcellular location">
    <subcellularLocation>
        <location evidence="1">Cytoplasm</location>
    </subcellularLocation>
</comment>
<comment type="similarity">
    <text evidence="1">Belongs to the DeoC/FbaB aldolase family. DeoC type 1 subfamily.</text>
</comment>
<name>DEOC_BACMK</name>
<reference key="1">
    <citation type="journal article" date="2008" name="Chem. Biol. Interact.">
        <title>Extending the Bacillus cereus group genomics to putative food-borne pathogens of different toxicity.</title>
        <authorList>
            <person name="Lapidus A."/>
            <person name="Goltsman E."/>
            <person name="Auger S."/>
            <person name="Galleron N."/>
            <person name="Segurens B."/>
            <person name="Dossat C."/>
            <person name="Land M.L."/>
            <person name="Broussolle V."/>
            <person name="Brillard J."/>
            <person name="Guinebretiere M.-H."/>
            <person name="Sanchis V."/>
            <person name="Nguen-the C."/>
            <person name="Lereclus D."/>
            <person name="Richardson P."/>
            <person name="Wincker P."/>
            <person name="Weissenbach J."/>
            <person name="Ehrlich S.D."/>
            <person name="Sorokin A."/>
        </authorList>
    </citation>
    <scope>NUCLEOTIDE SEQUENCE [LARGE SCALE GENOMIC DNA]</scope>
    <source>
        <strain>KBAB4</strain>
    </source>
</reference>
<keyword id="KW-0963">Cytoplasm</keyword>
<keyword id="KW-0456">Lyase</keyword>
<keyword id="KW-0704">Schiff base</keyword>
<feature type="chain" id="PRO_1000094836" description="Deoxyribose-phosphate aldolase">
    <location>
        <begin position="1"/>
        <end position="223"/>
    </location>
</feature>
<feature type="active site" description="Proton donor/acceptor" evidence="1">
    <location>
        <position position="89"/>
    </location>
</feature>
<feature type="active site" description="Schiff-base intermediate with acetaldehyde" evidence="1">
    <location>
        <position position="152"/>
    </location>
</feature>
<feature type="active site" description="Proton donor/acceptor" evidence="1">
    <location>
        <position position="181"/>
    </location>
</feature>
<gene>
    <name evidence="1" type="primary">deoC</name>
    <name type="ordered locus">BcerKBAB4_1752</name>
</gene>